<protein>
    <recommendedName>
        <fullName evidence="1">Ribonuclease HII</fullName>
        <shortName evidence="1">RNase HII</shortName>
        <ecNumber evidence="1">3.1.26.4</ecNumber>
    </recommendedName>
</protein>
<feature type="chain" id="PRO_1000117660" description="Ribonuclease HII">
    <location>
        <begin position="1"/>
        <end position="206"/>
    </location>
</feature>
<feature type="domain" description="RNase H type-2" evidence="2">
    <location>
        <begin position="22"/>
        <end position="206"/>
    </location>
</feature>
<feature type="binding site" evidence="1">
    <location>
        <position position="28"/>
    </location>
    <ligand>
        <name>a divalent metal cation</name>
        <dbReference type="ChEBI" id="CHEBI:60240"/>
    </ligand>
</feature>
<feature type="binding site" evidence="1">
    <location>
        <position position="29"/>
    </location>
    <ligand>
        <name>a divalent metal cation</name>
        <dbReference type="ChEBI" id="CHEBI:60240"/>
    </ligand>
</feature>
<feature type="binding site" evidence="1">
    <location>
        <position position="120"/>
    </location>
    <ligand>
        <name>a divalent metal cation</name>
        <dbReference type="ChEBI" id="CHEBI:60240"/>
    </ligand>
</feature>
<evidence type="ECO:0000255" key="1">
    <source>
        <dbReference type="HAMAP-Rule" id="MF_00052"/>
    </source>
</evidence>
<evidence type="ECO:0000255" key="2">
    <source>
        <dbReference type="PROSITE-ProRule" id="PRU01319"/>
    </source>
</evidence>
<accession>B9MQX2</accession>
<keyword id="KW-0963">Cytoplasm</keyword>
<keyword id="KW-0255">Endonuclease</keyword>
<keyword id="KW-0378">Hydrolase</keyword>
<keyword id="KW-0464">Manganese</keyword>
<keyword id="KW-0479">Metal-binding</keyword>
<keyword id="KW-0540">Nuclease</keyword>
<comment type="function">
    <text evidence="1">Endonuclease that specifically degrades the RNA of RNA-DNA hybrids.</text>
</comment>
<comment type="catalytic activity">
    <reaction evidence="1">
        <text>Endonucleolytic cleavage to 5'-phosphomonoester.</text>
        <dbReference type="EC" id="3.1.26.4"/>
    </reaction>
</comment>
<comment type="cofactor">
    <cofactor evidence="1">
        <name>Mn(2+)</name>
        <dbReference type="ChEBI" id="CHEBI:29035"/>
    </cofactor>
    <cofactor evidence="1">
        <name>Mg(2+)</name>
        <dbReference type="ChEBI" id="CHEBI:18420"/>
    </cofactor>
    <text evidence="1">Manganese or magnesium. Binds 1 divalent metal ion per monomer in the absence of substrate. May bind a second metal ion after substrate binding.</text>
</comment>
<comment type="subcellular location">
    <subcellularLocation>
        <location evidence="1">Cytoplasm</location>
    </subcellularLocation>
</comment>
<comment type="similarity">
    <text evidence="1">Belongs to the RNase HII family.</text>
</comment>
<reference key="1">
    <citation type="submission" date="2009-01" db="EMBL/GenBank/DDBJ databases">
        <title>Complete sequence of chromosome of Caldicellulosiruptor becscii DSM 6725.</title>
        <authorList>
            <person name="Lucas S."/>
            <person name="Copeland A."/>
            <person name="Lapidus A."/>
            <person name="Glavina del Rio T."/>
            <person name="Tice H."/>
            <person name="Bruce D."/>
            <person name="Goodwin L."/>
            <person name="Pitluck S."/>
            <person name="Sims D."/>
            <person name="Meincke L."/>
            <person name="Brettin T."/>
            <person name="Detter J.C."/>
            <person name="Han C."/>
            <person name="Larimer F."/>
            <person name="Land M."/>
            <person name="Hauser L."/>
            <person name="Kyrpides N."/>
            <person name="Ovchinnikova G."/>
            <person name="Kataeva I."/>
            <person name="Adams M.W.W."/>
        </authorList>
    </citation>
    <scope>NUCLEOTIDE SEQUENCE [LARGE SCALE GENOMIC DNA]</scope>
    <source>
        <strain>ATCC BAA-1888 / DSM 6725 / KCTC 15123 / Z-1320</strain>
    </source>
</reference>
<sequence length="206" mass="23521">MRLSEDENYFEIEEKLLNEGYRFICGVDEAGRGPLAGPVFAAAVVMDRKRIIEGVRDSKKLTPKKREKLFEEIIKESIAYSVAMVDSKVIDEININNATFLAMKNAIENLKIEPDIVLVDGYKIPNLGFNQRAIIKGDRKSYSIACASILAKVSRDRYIVEISSKYPLYKFEKHKGYGTKEHIEILQKYGPCEIHRISFLKNILSL</sequence>
<name>RNH2_CALBD</name>
<dbReference type="EC" id="3.1.26.4" evidence="1"/>
<dbReference type="EMBL" id="CP001393">
    <property type="protein sequence ID" value="ACM60076.1"/>
    <property type="molecule type" value="Genomic_DNA"/>
</dbReference>
<dbReference type="RefSeq" id="WP_015907494.1">
    <property type="nucleotide sequence ID" value="NC_012034.1"/>
</dbReference>
<dbReference type="SMR" id="B9MQX2"/>
<dbReference type="STRING" id="521460.Athe_0974"/>
<dbReference type="GeneID" id="31772326"/>
<dbReference type="KEGG" id="ate:Athe_0974"/>
<dbReference type="eggNOG" id="COG0164">
    <property type="taxonomic scope" value="Bacteria"/>
</dbReference>
<dbReference type="HOGENOM" id="CLU_036532_3_2_9"/>
<dbReference type="Proteomes" id="UP000007723">
    <property type="component" value="Chromosome"/>
</dbReference>
<dbReference type="GO" id="GO:0005737">
    <property type="term" value="C:cytoplasm"/>
    <property type="evidence" value="ECO:0007669"/>
    <property type="project" value="UniProtKB-SubCell"/>
</dbReference>
<dbReference type="GO" id="GO:0032299">
    <property type="term" value="C:ribonuclease H2 complex"/>
    <property type="evidence" value="ECO:0007669"/>
    <property type="project" value="TreeGrafter"/>
</dbReference>
<dbReference type="GO" id="GO:0030145">
    <property type="term" value="F:manganese ion binding"/>
    <property type="evidence" value="ECO:0007669"/>
    <property type="project" value="UniProtKB-UniRule"/>
</dbReference>
<dbReference type="GO" id="GO:0003723">
    <property type="term" value="F:RNA binding"/>
    <property type="evidence" value="ECO:0007669"/>
    <property type="project" value="InterPro"/>
</dbReference>
<dbReference type="GO" id="GO:0004523">
    <property type="term" value="F:RNA-DNA hybrid ribonuclease activity"/>
    <property type="evidence" value="ECO:0007669"/>
    <property type="project" value="UniProtKB-UniRule"/>
</dbReference>
<dbReference type="GO" id="GO:0043137">
    <property type="term" value="P:DNA replication, removal of RNA primer"/>
    <property type="evidence" value="ECO:0007669"/>
    <property type="project" value="TreeGrafter"/>
</dbReference>
<dbReference type="GO" id="GO:0006298">
    <property type="term" value="P:mismatch repair"/>
    <property type="evidence" value="ECO:0007669"/>
    <property type="project" value="TreeGrafter"/>
</dbReference>
<dbReference type="CDD" id="cd07182">
    <property type="entry name" value="RNase_HII_bacteria_HII_like"/>
    <property type="match status" value="1"/>
</dbReference>
<dbReference type="FunFam" id="3.30.420.10:FF:000006">
    <property type="entry name" value="Ribonuclease HII"/>
    <property type="match status" value="1"/>
</dbReference>
<dbReference type="Gene3D" id="3.30.420.10">
    <property type="entry name" value="Ribonuclease H-like superfamily/Ribonuclease H"/>
    <property type="match status" value="1"/>
</dbReference>
<dbReference type="HAMAP" id="MF_00052_B">
    <property type="entry name" value="RNase_HII_B"/>
    <property type="match status" value="1"/>
</dbReference>
<dbReference type="InterPro" id="IPR022898">
    <property type="entry name" value="RNase_HII"/>
</dbReference>
<dbReference type="InterPro" id="IPR001352">
    <property type="entry name" value="RNase_HII/HIII"/>
</dbReference>
<dbReference type="InterPro" id="IPR024567">
    <property type="entry name" value="RNase_HII/HIII_dom"/>
</dbReference>
<dbReference type="InterPro" id="IPR012337">
    <property type="entry name" value="RNaseH-like_sf"/>
</dbReference>
<dbReference type="InterPro" id="IPR036397">
    <property type="entry name" value="RNaseH_sf"/>
</dbReference>
<dbReference type="NCBIfam" id="NF000594">
    <property type="entry name" value="PRK00015.1-1"/>
    <property type="match status" value="1"/>
</dbReference>
<dbReference type="NCBIfam" id="NF000595">
    <property type="entry name" value="PRK00015.1-3"/>
    <property type="match status" value="1"/>
</dbReference>
<dbReference type="PANTHER" id="PTHR10954">
    <property type="entry name" value="RIBONUCLEASE H2 SUBUNIT A"/>
    <property type="match status" value="1"/>
</dbReference>
<dbReference type="PANTHER" id="PTHR10954:SF18">
    <property type="entry name" value="RIBONUCLEASE HII"/>
    <property type="match status" value="1"/>
</dbReference>
<dbReference type="Pfam" id="PF01351">
    <property type="entry name" value="RNase_HII"/>
    <property type="match status" value="1"/>
</dbReference>
<dbReference type="SUPFAM" id="SSF53098">
    <property type="entry name" value="Ribonuclease H-like"/>
    <property type="match status" value="1"/>
</dbReference>
<dbReference type="PROSITE" id="PS51975">
    <property type="entry name" value="RNASE_H_2"/>
    <property type="match status" value="1"/>
</dbReference>
<proteinExistence type="inferred from homology"/>
<gene>
    <name evidence="1" type="primary">rnhB</name>
    <name type="ordered locus">Athe_0974</name>
</gene>
<organism>
    <name type="scientific">Caldicellulosiruptor bescii (strain ATCC BAA-1888 / DSM 6725 / KCTC 15123 / Z-1320)</name>
    <name type="common">Anaerocellum thermophilum</name>
    <dbReference type="NCBI Taxonomy" id="521460"/>
    <lineage>
        <taxon>Bacteria</taxon>
        <taxon>Bacillati</taxon>
        <taxon>Bacillota</taxon>
        <taxon>Bacillota incertae sedis</taxon>
        <taxon>Caldicellulosiruptorales</taxon>
        <taxon>Caldicellulosiruptoraceae</taxon>
        <taxon>Caldicellulosiruptor</taxon>
    </lineage>
</organism>